<comment type="function">
    <text evidence="1">Protein S19 forms a complex with S13 that binds strongly to the 16S ribosomal RNA.</text>
</comment>
<comment type="similarity">
    <text evidence="1">Belongs to the universal ribosomal protein uS19 family.</text>
</comment>
<gene>
    <name evidence="1" type="primary">rpsS</name>
    <name type="ordered locus">SUB0072</name>
</gene>
<sequence>MGRSLKKGPFVDEHLMKKVEAQANDEKKKVIKTWSRRSTIFPSFIGYTIAVYDGRKHVPVYIQEDMVGHKLGEFAPTRTYKGHAADDKKTRR</sequence>
<proteinExistence type="inferred from homology"/>
<feature type="chain" id="PRO_1000146416" description="Small ribosomal subunit protein uS19">
    <location>
        <begin position="1"/>
        <end position="92"/>
    </location>
</feature>
<evidence type="ECO:0000255" key="1">
    <source>
        <dbReference type="HAMAP-Rule" id="MF_00531"/>
    </source>
</evidence>
<evidence type="ECO:0000305" key="2"/>
<organism>
    <name type="scientific">Streptococcus uberis (strain ATCC BAA-854 / 0140J)</name>
    <dbReference type="NCBI Taxonomy" id="218495"/>
    <lineage>
        <taxon>Bacteria</taxon>
        <taxon>Bacillati</taxon>
        <taxon>Bacillota</taxon>
        <taxon>Bacilli</taxon>
        <taxon>Lactobacillales</taxon>
        <taxon>Streptococcaceae</taxon>
        <taxon>Streptococcus</taxon>
    </lineage>
</organism>
<dbReference type="EMBL" id="AM946015">
    <property type="protein sequence ID" value="CAR40446.1"/>
    <property type="molecule type" value="Genomic_DNA"/>
</dbReference>
<dbReference type="RefSeq" id="WP_000533765.1">
    <property type="nucleotide sequence ID" value="NC_012004.1"/>
</dbReference>
<dbReference type="SMR" id="B9DSV4"/>
<dbReference type="STRING" id="218495.SUB0072"/>
<dbReference type="GeneID" id="98392396"/>
<dbReference type="KEGG" id="sub:SUB0072"/>
<dbReference type="eggNOG" id="COG0185">
    <property type="taxonomic scope" value="Bacteria"/>
</dbReference>
<dbReference type="HOGENOM" id="CLU_144911_0_1_9"/>
<dbReference type="OrthoDB" id="9797833at2"/>
<dbReference type="Proteomes" id="UP000000449">
    <property type="component" value="Chromosome"/>
</dbReference>
<dbReference type="GO" id="GO:0005737">
    <property type="term" value="C:cytoplasm"/>
    <property type="evidence" value="ECO:0007669"/>
    <property type="project" value="UniProtKB-ARBA"/>
</dbReference>
<dbReference type="GO" id="GO:0015935">
    <property type="term" value="C:small ribosomal subunit"/>
    <property type="evidence" value="ECO:0007669"/>
    <property type="project" value="InterPro"/>
</dbReference>
<dbReference type="GO" id="GO:0019843">
    <property type="term" value="F:rRNA binding"/>
    <property type="evidence" value="ECO:0007669"/>
    <property type="project" value="UniProtKB-UniRule"/>
</dbReference>
<dbReference type="GO" id="GO:0003735">
    <property type="term" value="F:structural constituent of ribosome"/>
    <property type="evidence" value="ECO:0007669"/>
    <property type="project" value="InterPro"/>
</dbReference>
<dbReference type="GO" id="GO:0000028">
    <property type="term" value="P:ribosomal small subunit assembly"/>
    <property type="evidence" value="ECO:0007669"/>
    <property type="project" value="TreeGrafter"/>
</dbReference>
<dbReference type="GO" id="GO:0006412">
    <property type="term" value="P:translation"/>
    <property type="evidence" value="ECO:0007669"/>
    <property type="project" value="UniProtKB-UniRule"/>
</dbReference>
<dbReference type="FunFam" id="3.30.860.10:FF:000001">
    <property type="entry name" value="30S ribosomal protein S19"/>
    <property type="match status" value="1"/>
</dbReference>
<dbReference type="Gene3D" id="3.30.860.10">
    <property type="entry name" value="30s Ribosomal Protein S19, Chain A"/>
    <property type="match status" value="1"/>
</dbReference>
<dbReference type="HAMAP" id="MF_00531">
    <property type="entry name" value="Ribosomal_uS19"/>
    <property type="match status" value="1"/>
</dbReference>
<dbReference type="InterPro" id="IPR002222">
    <property type="entry name" value="Ribosomal_uS19"/>
</dbReference>
<dbReference type="InterPro" id="IPR005732">
    <property type="entry name" value="Ribosomal_uS19_bac-type"/>
</dbReference>
<dbReference type="InterPro" id="IPR020934">
    <property type="entry name" value="Ribosomal_uS19_CS"/>
</dbReference>
<dbReference type="InterPro" id="IPR023575">
    <property type="entry name" value="Ribosomal_uS19_SF"/>
</dbReference>
<dbReference type="NCBIfam" id="TIGR01050">
    <property type="entry name" value="rpsS_bact"/>
    <property type="match status" value="1"/>
</dbReference>
<dbReference type="PANTHER" id="PTHR11880">
    <property type="entry name" value="RIBOSOMAL PROTEIN S19P FAMILY MEMBER"/>
    <property type="match status" value="1"/>
</dbReference>
<dbReference type="PANTHER" id="PTHR11880:SF8">
    <property type="entry name" value="SMALL RIBOSOMAL SUBUNIT PROTEIN US19M"/>
    <property type="match status" value="1"/>
</dbReference>
<dbReference type="Pfam" id="PF00203">
    <property type="entry name" value="Ribosomal_S19"/>
    <property type="match status" value="1"/>
</dbReference>
<dbReference type="PIRSF" id="PIRSF002144">
    <property type="entry name" value="Ribosomal_S19"/>
    <property type="match status" value="1"/>
</dbReference>
<dbReference type="PRINTS" id="PR00975">
    <property type="entry name" value="RIBOSOMALS19"/>
</dbReference>
<dbReference type="SUPFAM" id="SSF54570">
    <property type="entry name" value="Ribosomal protein S19"/>
    <property type="match status" value="1"/>
</dbReference>
<dbReference type="PROSITE" id="PS00323">
    <property type="entry name" value="RIBOSOMAL_S19"/>
    <property type="match status" value="1"/>
</dbReference>
<name>RS19_STRU0</name>
<keyword id="KW-1185">Reference proteome</keyword>
<keyword id="KW-0687">Ribonucleoprotein</keyword>
<keyword id="KW-0689">Ribosomal protein</keyword>
<keyword id="KW-0694">RNA-binding</keyword>
<keyword id="KW-0699">rRNA-binding</keyword>
<reference key="1">
    <citation type="journal article" date="2009" name="BMC Genomics">
        <title>Evidence for niche adaptation in the genome of the bovine pathogen Streptococcus uberis.</title>
        <authorList>
            <person name="Ward P.N."/>
            <person name="Holden M.T.G."/>
            <person name="Leigh J.A."/>
            <person name="Lennard N."/>
            <person name="Bignell A."/>
            <person name="Barron A."/>
            <person name="Clark L."/>
            <person name="Quail M.A."/>
            <person name="Woodward J."/>
            <person name="Barrell B.G."/>
            <person name="Egan S.A."/>
            <person name="Field T.R."/>
            <person name="Maskell D."/>
            <person name="Kehoe M."/>
            <person name="Dowson C.G."/>
            <person name="Chanter N."/>
            <person name="Whatmore A.M."/>
            <person name="Bentley S.D."/>
            <person name="Parkhill J."/>
        </authorList>
    </citation>
    <scope>NUCLEOTIDE SEQUENCE [LARGE SCALE GENOMIC DNA]</scope>
    <source>
        <strain>ATCC BAA-854 / 0140J</strain>
    </source>
</reference>
<protein>
    <recommendedName>
        <fullName evidence="1">Small ribosomal subunit protein uS19</fullName>
    </recommendedName>
    <alternativeName>
        <fullName evidence="2">30S ribosomal protein S19</fullName>
    </alternativeName>
</protein>
<accession>B9DSV4</accession>